<sequence length="100" mass="11753">MAKKSMIEREKKRQRLVAKYASKRQELKAQLASAETQEEIMSIHRQLQRLPRNSAPSRLRNRCWLTGRPRGYYRDFGLCRNALREMAHQGLLPGVVKSSW</sequence>
<keyword id="KW-1185">Reference proteome</keyword>
<keyword id="KW-0687">Ribonucleoprotein</keyword>
<keyword id="KW-0689">Ribosomal protein</keyword>
<keyword id="KW-0694">RNA-binding</keyword>
<keyword id="KW-0699">rRNA-binding</keyword>
<gene>
    <name evidence="1" type="primary">rpsN</name>
    <name evidence="1" type="synonym">rps14</name>
    <name type="ordered locus">tll1826</name>
</gene>
<dbReference type="EMBL" id="BA000039">
    <property type="protein sequence ID" value="BAC09378.1"/>
    <property type="molecule type" value="Genomic_DNA"/>
</dbReference>
<dbReference type="RefSeq" id="NP_682616.1">
    <property type="nucleotide sequence ID" value="NC_004113.1"/>
</dbReference>
<dbReference type="RefSeq" id="WP_011057663.1">
    <property type="nucleotide sequence ID" value="NC_004113.1"/>
</dbReference>
<dbReference type="SMR" id="Q8DHW7"/>
<dbReference type="STRING" id="197221.gene:10748431"/>
<dbReference type="EnsemblBacteria" id="BAC09378">
    <property type="protein sequence ID" value="BAC09378"/>
    <property type="gene ID" value="BAC09378"/>
</dbReference>
<dbReference type="KEGG" id="tel:tll1826"/>
<dbReference type="PATRIC" id="fig|197221.4.peg.1909"/>
<dbReference type="eggNOG" id="COG0199">
    <property type="taxonomic scope" value="Bacteria"/>
</dbReference>
<dbReference type="Proteomes" id="UP000000440">
    <property type="component" value="Chromosome"/>
</dbReference>
<dbReference type="GO" id="GO:0005737">
    <property type="term" value="C:cytoplasm"/>
    <property type="evidence" value="ECO:0007669"/>
    <property type="project" value="UniProtKB-ARBA"/>
</dbReference>
<dbReference type="GO" id="GO:0015935">
    <property type="term" value="C:small ribosomal subunit"/>
    <property type="evidence" value="ECO:0007669"/>
    <property type="project" value="TreeGrafter"/>
</dbReference>
<dbReference type="GO" id="GO:0019843">
    <property type="term" value="F:rRNA binding"/>
    <property type="evidence" value="ECO:0007669"/>
    <property type="project" value="UniProtKB-UniRule"/>
</dbReference>
<dbReference type="GO" id="GO:0003735">
    <property type="term" value="F:structural constituent of ribosome"/>
    <property type="evidence" value="ECO:0007669"/>
    <property type="project" value="InterPro"/>
</dbReference>
<dbReference type="GO" id="GO:0006412">
    <property type="term" value="P:translation"/>
    <property type="evidence" value="ECO:0007669"/>
    <property type="project" value="UniProtKB-UniRule"/>
</dbReference>
<dbReference type="FunFam" id="1.10.287.1480:FF:000001">
    <property type="entry name" value="30S ribosomal protein S14"/>
    <property type="match status" value="1"/>
</dbReference>
<dbReference type="Gene3D" id="1.10.287.1480">
    <property type="match status" value="1"/>
</dbReference>
<dbReference type="HAMAP" id="MF_00537">
    <property type="entry name" value="Ribosomal_uS14_1"/>
    <property type="match status" value="1"/>
</dbReference>
<dbReference type="InterPro" id="IPR001209">
    <property type="entry name" value="Ribosomal_uS14"/>
</dbReference>
<dbReference type="InterPro" id="IPR023036">
    <property type="entry name" value="Ribosomal_uS14_bac/plastid"/>
</dbReference>
<dbReference type="InterPro" id="IPR018271">
    <property type="entry name" value="Ribosomal_uS14_CS"/>
</dbReference>
<dbReference type="NCBIfam" id="NF006477">
    <property type="entry name" value="PRK08881.1"/>
    <property type="match status" value="1"/>
</dbReference>
<dbReference type="PANTHER" id="PTHR19836">
    <property type="entry name" value="30S RIBOSOMAL PROTEIN S14"/>
    <property type="match status" value="1"/>
</dbReference>
<dbReference type="PANTHER" id="PTHR19836:SF19">
    <property type="entry name" value="SMALL RIBOSOMAL SUBUNIT PROTEIN US14M"/>
    <property type="match status" value="1"/>
</dbReference>
<dbReference type="Pfam" id="PF00253">
    <property type="entry name" value="Ribosomal_S14"/>
    <property type="match status" value="1"/>
</dbReference>
<dbReference type="SUPFAM" id="SSF57716">
    <property type="entry name" value="Glucocorticoid receptor-like (DNA-binding domain)"/>
    <property type="match status" value="1"/>
</dbReference>
<dbReference type="PROSITE" id="PS00527">
    <property type="entry name" value="RIBOSOMAL_S14"/>
    <property type="match status" value="1"/>
</dbReference>
<feature type="chain" id="PRO_1000128620" description="Small ribosomal subunit protein uS14">
    <location>
        <begin position="1"/>
        <end position="100"/>
    </location>
</feature>
<evidence type="ECO:0000255" key="1">
    <source>
        <dbReference type="HAMAP-Rule" id="MF_00537"/>
    </source>
</evidence>
<evidence type="ECO:0000305" key="2"/>
<reference key="1">
    <citation type="journal article" date="2002" name="DNA Res.">
        <title>Complete genome structure of the thermophilic cyanobacterium Thermosynechococcus elongatus BP-1.</title>
        <authorList>
            <person name="Nakamura Y."/>
            <person name="Kaneko T."/>
            <person name="Sato S."/>
            <person name="Ikeuchi M."/>
            <person name="Katoh H."/>
            <person name="Sasamoto S."/>
            <person name="Watanabe A."/>
            <person name="Iriguchi M."/>
            <person name="Kawashima K."/>
            <person name="Kimura T."/>
            <person name="Kishida Y."/>
            <person name="Kiyokawa C."/>
            <person name="Kohara M."/>
            <person name="Matsumoto M."/>
            <person name="Matsuno A."/>
            <person name="Nakazaki N."/>
            <person name="Shimpo S."/>
            <person name="Sugimoto M."/>
            <person name="Takeuchi C."/>
            <person name="Yamada M."/>
            <person name="Tabata S."/>
        </authorList>
    </citation>
    <scope>NUCLEOTIDE SEQUENCE [LARGE SCALE GENOMIC DNA]</scope>
    <source>
        <strain>NIES-2133 / IAM M-273 / BP-1</strain>
    </source>
</reference>
<name>RS14_THEVB</name>
<comment type="function">
    <text evidence="1">Binds 16S rRNA, required for the assembly of 30S particles and may also be responsible for determining the conformation of the 16S rRNA at the A site.</text>
</comment>
<comment type="subunit">
    <text evidence="1">Part of the 30S ribosomal subunit. Contacts proteins S3 and S10.</text>
</comment>
<comment type="similarity">
    <text evidence="1">Belongs to the universal ribosomal protein uS14 family.</text>
</comment>
<protein>
    <recommendedName>
        <fullName evidence="1">Small ribosomal subunit protein uS14</fullName>
    </recommendedName>
    <alternativeName>
        <fullName evidence="2">30S ribosomal protein S14</fullName>
    </alternativeName>
</protein>
<accession>Q8DHW7</accession>
<proteinExistence type="inferred from homology"/>
<organism>
    <name type="scientific">Thermosynechococcus vestitus (strain NIES-2133 / IAM M-273 / BP-1)</name>
    <dbReference type="NCBI Taxonomy" id="197221"/>
    <lineage>
        <taxon>Bacteria</taxon>
        <taxon>Bacillati</taxon>
        <taxon>Cyanobacteriota</taxon>
        <taxon>Cyanophyceae</taxon>
        <taxon>Acaryochloridales</taxon>
        <taxon>Thermosynechococcaceae</taxon>
        <taxon>Thermosynechococcus</taxon>
    </lineage>
</organism>